<accession>O87390</accession>
<gene>
    <name type="primary">glxB</name>
    <name type="ordered locus">R00087</name>
    <name type="ORF">SMc02610</name>
</gene>
<sequence length="301" mass="32118">MCGIVGLFLKDSRLEPQLGQLLSDMLITMTDRGPDSAGLAIYGSATEGKAKVTIQSAKPEIDFADLERDLAEAGVPARVAVKSTHAVVAIAAARLADVRAVLAAIRPDVRIMGAGDSVEIYKEVGLPKDVVARFDVRSMGGSHGIGHTRMATESAVTTLGAHPFSTGSDQCLVHNGSLSNHNNLRRELIREGIAFETQNDTEVAAAYLTAEMAKGKDLGQALTGALDDLDGFFTFVVGTKSGFGVVRDPIACKPAVMAETDRYVAFGSEYRALVNLPDIESARIWEPEPATVYFWDHQKAA</sequence>
<feature type="initiator methionine" description="Removed" evidence="1">
    <location>
        <position position="1"/>
    </location>
</feature>
<feature type="chain" id="PRO_0000056941" description="Glutamine amidotransferase-like protein GlxB">
    <location>
        <begin position="2"/>
        <end position="301"/>
    </location>
</feature>
<feature type="domain" description="Glutamine amidotransferase type-2" evidence="2">
    <location>
        <begin position="2"/>
        <end position="298"/>
    </location>
</feature>
<feature type="active site" evidence="1">
    <location>
        <position position="2"/>
    </location>
</feature>
<reference key="1">
    <citation type="submission" date="1998-03" db="EMBL/GenBank/DDBJ databases">
        <authorList>
            <person name="Powers E.L."/>
            <person name="Vuyyuru V."/>
            <person name="Kahn M.L."/>
        </authorList>
    </citation>
    <scope>NUCLEOTIDE SEQUENCE [GENOMIC DNA]</scope>
    <source>
        <strain>1021</strain>
    </source>
</reference>
<reference key="2">
    <citation type="journal article" date="2001" name="Proc. Natl. Acad. Sci. U.S.A.">
        <title>Analysis of the chromosome sequence of the legume symbiont Sinorhizobium meliloti strain 1021.</title>
        <authorList>
            <person name="Capela D."/>
            <person name="Barloy-Hubler F."/>
            <person name="Gouzy J."/>
            <person name="Bothe G."/>
            <person name="Ampe F."/>
            <person name="Batut J."/>
            <person name="Boistard P."/>
            <person name="Becker A."/>
            <person name="Boutry M."/>
            <person name="Cadieu E."/>
            <person name="Dreano S."/>
            <person name="Gloux S."/>
            <person name="Godrie T."/>
            <person name="Goffeau A."/>
            <person name="Kahn D."/>
            <person name="Kiss E."/>
            <person name="Lelaure V."/>
            <person name="Masuy D."/>
            <person name="Pohl T."/>
            <person name="Portetelle D."/>
            <person name="Puehler A."/>
            <person name="Purnelle B."/>
            <person name="Ramsperger U."/>
            <person name="Renard C."/>
            <person name="Thebault P."/>
            <person name="Vandenbol M."/>
            <person name="Weidner S."/>
            <person name="Galibert F."/>
        </authorList>
    </citation>
    <scope>NUCLEOTIDE SEQUENCE [LARGE SCALE GENOMIC DNA]</scope>
    <source>
        <strain>1021</strain>
    </source>
</reference>
<reference key="3">
    <citation type="journal article" date="2001" name="Science">
        <title>The composite genome of the legume symbiont Sinorhizobium meliloti.</title>
        <authorList>
            <person name="Galibert F."/>
            <person name="Finan T.M."/>
            <person name="Long S.R."/>
            <person name="Puehler A."/>
            <person name="Abola P."/>
            <person name="Ampe F."/>
            <person name="Barloy-Hubler F."/>
            <person name="Barnett M.J."/>
            <person name="Becker A."/>
            <person name="Boistard P."/>
            <person name="Bothe G."/>
            <person name="Boutry M."/>
            <person name="Bowser L."/>
            <person name="Buhrmester J."/>
            <person name="Cadieu E."/>
            <person name="Capela D."/>
            <person name="Chain P."/>
            <person name="Cowie A."/>
            <person name="Davis R.W."/>
            <person name="Dreano S."/>
            <person name="Federspiel N.A."/>
            <person name="Fisher R.F."/>
            <person name="Gloux S."/>
            <person name="Godrie T."/>
            <person name="Goffeau A."/>
            <person name="Golding B."/>
            <person name="Gouzy J."/>
            <person name="Gurjal M."/>
            <person name="Hernandez-Lucas I."/>
            <person name="Hong A."/>
            <person name="Huizar L."/>
            <person name="Hyman R.W."/>
            <person name="Jones T."/>
            <person name="Kahn D."/>
            <person name="Kahn M.L."/>
            <person name="Kalman S."/>
            <person name="Keating D.H."/>
            <person name="Kiss E."/>
            <person name="Komp C."/>
            <person name="Lelaure V."/>
            <person name="Masuy D."/>
            <person name="Palm C."/>
            <person name="Peck M.C."/>
            <person name="Pohl T.M."/>
            <person name="Portetelle D."/>
            <person name="Purnelle B."/>
            <person name="Ramsperger U."/>
            <person name="Surzycki R."/>
            <person name="Thebault P."/>
            <person name="Vandenbol M."/>
            <person name="Vorhoelter F.J."/>
            <person name="Weidner S."/>
            <person name="Wells D.H."/>
            <person name="Wong K."/>
            <person name="Yeh K.-C."/>
            <person name="Batut J."/>
        </authorList>
    </citation>
    <scope>NUCLEOTIDE SEQUENCE [LARGE SCALE GENOMIC DNA]</scope>
    <source>
        <strain>1021</strain>
    </source>
</reference>
<proteinExistence type="inferred from homology"/>
<dbReference type="EC" id="2.4.2.-"/>
<dbReference type="EMBL" id="AF055582">
    <property type="protein sequence ID" value="AAC62220.1"/>
    <property type="status" value="ALT_INIT"/>
    <property type="molecule type" value="Genomic_DNA"/>
</dbReference>
<dbReference type="EMBL" id="AL591688">
    <property type="protein sequence ID" value="CAC41474.1"/>
    <property type="status" value="ALT_INIT"/>
    <property type="molecule type" value="Genomic_DNA"/>
</dbReference>
<dbReference type="RefSeq" id="NP_384193.1">
    <property type="nucleotide sequence ID" value="NC_003047.1"/>
</dbReference>
<dbReference type="RefSeq" id="WP_003536328.1">
    <property type="nucleotide sequence ID" value="NC_003047.1"/>
</dbReference>
<dbReference type="SMR" id="O87390"/>
<dbReference type="EnsemblBacteria" id="CAC41474">
    <property type="protein sequence ID" value="CAC41474"/>
    <property type="gene ID" value="SMc02610"/>
</dbReference>
<dbReference type="KEGG" id="sme:SMc02610"/>
<dbReference type="PATRIC" id="fig|266834.11.peg.1444"/>
<dbReference type="eggNOG" id="COG0034">
    <property type="taxonomic scope" value="Bacteria"/>
</dbReference>
<dbReference type="HOGENOM" id="CLU_077077_0_0_5"/>
<dbReference type="OrthoDB" id="9763290at2"/>
<dbReference type="Proteomes" id="UP000001976">
    <property type="component" value="Chromosome"/>
</dbReference>
<dbReference type="GO" id="GO:0016740">
    <property type="term" value="F:transferase activity"/>
    <property type="evidence" value="ECO:0007669"/>
    <property type="project" value="UniProtKB-KW"/>
</dbReference>
<dbReference type="CDD" id="cd01907">
    <property type="entry name" value="GlxB"/>
    <property type="match status" value="1"/>
</dbReference>
<dbReference type="Gene3D" id="3.60.20.10">
    <property type="entry name" value="Glutamine Phosphoribosylpyrophosphate, subunit 1, domain 1"/>
    <property type="match status" value="2"/>
</dbReference>
<dbReference type="InterPro" id="IPR017932">
    <property type="entry name" value="GATase_2_dom"/>
</dbReference>
<dbReference type="InterPro" id="IPR029055">
    <property type="entry name" value="Ntn_hydrolases_N"/>
</dbReference>
<dbReference type="PANTHER" id="PTHR11907">
    <property type="entry name" value="AMIDOPHOSPHORIBOSYLTRANSFERASE"/>
    <property type="match status" value="1"/>
</dbReference>
<dbReference type="Pfam" id="PF13522">
    <property type="entry name" value="GATase_6"/>
    <property type="match status" value="1"/>
</dbReference>
<dbReference type="SUPFAM" id="SSF56235">
    <property type="entry name" value="N-terminal nucleophile aminohydrolases (Ntn hydrolases)"/>
    <property type="match status" value="1"/>
</dbReference>
<dbReference type="PROSITE" id="PS51278">
    <property type="entry name" value="GATASE_TYPE_2"/>
    <property type="match status" value="1"/>
</dbReference>
<keyword id="KW-0315">Glutamine amidotransferase</keyword>
<keyword id="KW-1185">Reference proteome</keyword>
<keyword id="KW-0808">Transferase</keyword>
<evidence type="ECO:0000250" key="1"/>
<evidence type="ECO:0000255" key="2">
    <source>
        <dbReference type="PROSITE-ProRule" id="PRU00609"/>
    </source>
</evidence>
<evidence type="ECO:0000305" key="3"/>
<protein>
    <recommendedName>
        <fullName>Glutamine amidotransferase-like protein GlxB</fullName>
        <ecNumber>2.4.2.-</ecNumber>
    </recommendedName>
</protein>
<organism>
    <name type="scientific">Rhizobium meliloti (strain 1021)</name>
    <name type="common">Ensifer meliloti</name>
    <name type="synonym">Sinorhizobium meliloti</name>
    <dbReference type="NCBI Taxonomy" id="266834"/>
    <lineage>
        <taxon>Bacteria</taxon>
        <taxon>Pseudomonadati</taxon>
        <taxon>Pseudomonadota</taxon>
        <taxon>Alphaproteobacteria</taxon>
        <taxon>Hyphomicrobiales</taxon>
        <taxon>Rhizobiaceae</taxon>
        <taxon>Sinorhizobium/Ensifer group</taxon>
        <taxon>Sinorhizobium</taxon>
    </lineage>
</organism>
<name>GLXB_RHIME</name>
<comment type="sequence caution" evidence="3">
    <conflict type="erroneous initiation">
        <sequence resource="EMBL-CDS" id="AAC62220"/>
    </conflict>
</comment>
<comment type="sequence caution" evidence="3">
    <conflict type="erroneous initiation">
        <sequence resource="EMBL-CDS" id="CAC41474"/>
    </conflict>
</comment>